<proteinExistence type="inferred from homology"/>
<name>FUMH_DICDI</name>
<organism>
    <name type="scientific">Dictyostelium discoideum</name>
    <name type="common">Social amoeba</name>
    <dbReference type="NCBI Taxonomy" id="44689"/>
    <lineage>
        <taxon>Eukaryota</taxon>
        <taxon>Amoebozoa</taxon>
        <taxon>Evosea</taxon>
        <taxon>Eumycetozoa</taxon>
        <taxon>Dictyostelia</taxon>
        <taxon>Dictyosteliales</taxon>
        <taxon>Dictyosteliaceae</taxon>
        <taxon>Dictyostelium</taxon>
    </lineage>
</organism>
<dbReference type="EC" id="4.2.1.2" evidence="2"/>
<dbReference type="EMBL" id="AAFI02000036">
    <property type="protein sequence ID" value="EAL67226.1"/>
    <property type="molecule type" value="Genomic_DNA"/>
</dbReference>
<dbReference type="EMBL" id="AAFI02000036">
    <property type="protein sequence ID" value="EAL67227.1"/>
    <property type="molecule type" value="Genomic_DNA"/>
</dbReference>
<dbReference type="RefSeq" id="XP_001134561.1">
    <property type="nucleotide sequence ID" value="XM_001134561.1"/>
</dbReference>
<dbReference type="RefSeq" id="XP_641207.1">
    <property type="nucleotide sequence ID" value="XM_636115.1"/>
</dbReference>
<dbReference type="SMR" id="Q54VA2"/>
<dbReference type="FunCoup" id="Q54VA2">
    <property type="interactions" value="679"/>
</dbReference>
<dbReference type="STRING" id="44689.Q54VA2"/>
<dbReference type="PaxDb" id="44689-DDB0231397"/>
<dbReference type="EnsemblProtists" id="EAL67226">
    <property type="protein sequence ID" value="EAL67226"/>
    <property type="gene ID" value="DDB_G0280495"/>
</dbReference>
<dbReference type="EnsemblProtists" id="EAL67227">
    <property type="protein sequence ID" value="EAL67227"/>
    <property type="gene ID" value="DDB_G0280495"/>
</dbReference>
<dbReference type="GeneID" id="8622588"/>
<dbReference type="KEGG" id="ddi:DDB_G0280495"/>
<dbReference type="dictyBase" id="DDB_G0280495">
    <property type="gene designation" value="fumH"/>
</dbReference>
<dbReference type="VEuPathDB" id="AmoebaDB:DDB_G0280495"/>
<dbReference type="eggNOG" id="KOG1317">
    <property type="taxonomic scope" value="Eukaryota"/>
</dbReference>
<dbReference type="InParanoid" id="Q54VA2"/>
<dbReference type="OMA" id="AKWRAQT"/>
<dbReference type="PhylomeDB" id="Q54VA2"/>
<dbReference type="Reactome" id="R-DDI-71403">
    <property type="pathway name" value="Citric acid cycle (TCA cycle)"/>
</dbReference>
<dbReference type="Reactome" id="R-DDI-9837999">
    <property type="pathway name" value="Mitochondrial protein degradation"/>
</dbReference>
<dbReference type="UniPathway" id="UPA00223">
    <property type="reaction ID" value="UER01007"/>
</dbReference>
<dbReference type="PRO" id="PR:Q54VA2"/>
<dbReference type="Proteomes" id="UP000002195">
    <property type="component" value="Chromosome 3"/>
</dbReference>
<dbReference type="GO" id="GO:0005737">
    <property type="term" value="C:cytoplasm"/>
    <property type="evidence" value="ECO:0000250"/>
    <property type="project" value="dictyBase"/>
</dbReference>
<dbReference type="GO" id="GO:0005739">
    <property type="term" value="C:mitochondrion"/>
    <property type="evidence" value="ECO:0000250"/>
    <property type="project" value="dictyBase"/>
</dbReference>
<dbReference type="GO" id="GO:0045335">
    <property type="term" value="C:phagocytic vesicle"/>
    <property type="evidence" value="ECO:0007005"/>
    <property type="project" value="dictyBase"/>
</dbReference>
<dbReference type="GO" id="GO:0004333">
    <property type="term" value="F:fumarate hydratase activity"/>
    <property type="evidence" value="ECO:0000318"/>
    <property type="project" value="GO_Central"/>
</dbReference>
<dbReference type="GO" id="GO:0006106">
    <property type="term" value="P:fumarate metabolic process"/>
    <property type="evidence" value="ECO:0000318"/>
    <property type="project" value="GO_Central"/>
</dbReference>
<dbReference type="GO" id="GO:0006108">
    <property type="term" value="P:malate metabolic process"/>
    <property type="evidence" value="ECO:0000318"/>
    <property type="project" value="GO_Central"/>
</dbReference>
<dbReference type="GO" id="GO:0009617">
    <property type="term" value="P:response to bacterium"/>
    <property type="evidence" value="ECO:0007007"/>
    <property type="project" value="dictyBase"/>
</dbReference>
<dbReference type="GO" id="GO:0006099">
    <property type="term" value="P:tricarboxylic acid cycle"/>
    <property type="evidence" value="ECO:0000318"/>
    <property type="project" value="GO_Central"/>
</dbReference>
<dbReference type="CDD" id="cd01362">
    <property type="entry name" value="Fumarase_classII"/>
    <property type="match status" value="1"/>
</dbReference>
<dbReference type="FunFam" id="1.10.40.30:FF:000002">
    <property type="entry name" value="Fumarate hydratase class II"/>
    <property type="match status" value="1"/>
</dbReference>
<dbReference type="FunFam" id="1.10.275.10:FF:000001">
    <property type="entry name" value="Fumarate hydratase, mitochondrial"/>
    <property type="match status" value="1"/>
</dbReference>
<dbReference type="FunFam" id="1.20.200.10:FF:000001">
    <property type="entry name" value="Fumarate hydratase, mitochondrial"/>
    <property type="match status" value="1"/>
</dbReference>
<dbReference type="Gene3D" id="1.10.40.30">
    <property type="entry name" value="Fumarase/aspartase (C-terminal domain)"/>
    <property type="match status" value="1"/>
</dbReference>
<dbReference type="Gene3D" id="1.20.200.10">
    <property type="entry name" value="Fumarase/aspartase (Central domain)"/>
    <property type="match status" value="1"/>
</dbReference>
<dbReference type="Gene3D" id="1.10.275.10">
    <property type="entry name" value="Fumarase/aspartase (N-terminal domain)"/>
    <property type="match status" value="1"/>
</dbReference>
<dbReference type="HAMAP" id="MF_00743">
    <property type="entry name" value="FumaraseC"/>
    <property type="match status" value="1"/>
</dbReference>
<dbReference type="InterPro" id="IPR005677">
    <property type="entry name" value="Fum_hydII"/>
</dbReference>
<dbReference type="InterPro" id="IPR024083">
    <property type="entry name" value="Fumarase/histidase_N"/>
</dbReference>
<dbReference type="InterPro" id="IPR018951">
    <property type="entry name" value="Fumarase_C_C"/>
</dbReference>
<dbReference type="InterPro" id="IPR020557">
    <property type="entry name" value="Fumarate_lyase_CS"/>
</dbReference>
<dbReference type="InterPro" id="IPR000362">
    <property type="entry name" value="Fumarate_lyase_fam"/>
</dbReference>
<dbReference type="InterPro" id="IPR022761">
    <property type="entry name" value="Fumarate_lyase_N"/>
</dbReference>
<dbReference type="InterPro" id="IPR008948">
    <property type="entry name" value="L-Aspartase-like"/>
</dbReference>
<dbReference type="NCBIfam" id="TIGR00979">
    <property type="entry name" value="fumC_II"/>
    <property type="match status" value="1"/>
</dbReference>
<dbReference type="NCBIfam" id="NF008909">
    <property type="entry name" value="PRK12273.1"/>
    <property type="match status" value="1"/>
</dbReference>
<dbReference type="PANTHER" id="PTHR11444">
    <property type="entry name" value="ASPARTATEAMMONIA/ARGININOSUCCINATE/ADENYLOSUCCINATE LYASE"/>
    <property type="match status" value="1"/>
</dbReference>
<dbReference type="PANTHER" id="PTHR11444:SF1">
    <property type="entry name" value="FUMARATE HYDRATASE, MITOCHONDRIAL"/>
    <property type="match status" value="1"/>
</dbReference>
<dbReference type="Pfam" id="PF10415">
    <property type="entry name" value="FumaraseC_C"/>
    <property type="match status" value="1"/>
</dbReference>
<dbReference type="Pfam" id="PF00206">
    <property type="entry name" value="Lyase_1"/>
    <property type="match status" value="1"/>
</dbReference>
<dbReference type="PRINTS" id="PR00149">
    <property type="entry name" value="FUMRATELYASE"/>
</dbReference>
<dbReference type="SUPFAM" id="SSF48557">
    <property type="entry name" value="L-aspartase-like"/>
    <property type="match status" value="1"/>
</dbReference>
<dbReference type="PROSITE" id="PS00163">
    <property type="entry name" value="FUMARATE_LYASES"/>
    <property type="match status" value="1"/>
</dbReference>
<protein>
    <recommendedName>
        <fullName evidence="2">Fumarate hydratase, mitochondrial</fullName>
        <shortName evidence="2">Fumarase</shortName>
        <ecNumber evidence="2">4.2.1.2</ecNumber>
    </recommendedName>
</protein>
<accession>Q54VA2</accession>
<accession>Q54VA1</accession>
<keyword id="KW-0024">Alternative initiation</keyword>
<keyword id="KW-0963">Cytoplasm</keyword>
<keyword id="KW-0456">Lyase</keyword>
<keyword id="KW-0496">Mitochondrion</keyword>
<keyword id="KW-1185">Reference proteome</keyword>
<keyword id="KW-0809">Transit peptide</keyword>
<keyword id="KW-0816">Tricarboxylic acid cycle</keyword>
<feature type="transit peptide" description="Mitochondrion" evidence="5">
    <location>
        <begin position="1"/>
        <end position="19"/>
    </location>
</feature>
<feature type="chain" id="PRO_0000331360" description="Fumarate hydratase, mitochondrial">
    <location>
        <begin position="20"/>
        <end position="485"/>
    </location>
</feature>
<feature type="active site" description="Proton donor/acceptor" evidence="1">
    <location>
        <position position="209"/>
    </location>
</feature>
<feature type="active site" evidence="4">
    <location>
        <position position="339"/>
    </location>
</feature>
<feature type="binding site" evidence="1">
    <location>
        <begin position="118"/>
        <end position="120"/>
    </location>
    <ligand>
        <name>substrate</name>
    </ligand>
</feature>
<feature type="binding site" description="in site B" evidence="1">
    <location>
        <begin position="150"/>
        <end position="153"/>
    </location>
    <ligand>
        <name>substrate</name>
    </ligand>
</feature>
<feature type="binding site" evidence="1">
    <location>
        <begin position="160"/>
        <end position="162"/>
    </location>
    <ligand>
        <name>substrate</name>
    </ligand>
</feature>
<feature type="binding site" evidence="4">
    <location>
        <position position="208"/>
    </location>
    <ligand>
        <name>substrate</name>
    </ligand>
</feature>
<feature type="binding site" evidence="4">
    <location>
        <position position="340"/>
    </location>
    <ligand>
        <name>substrate</name>
    </ligand>
</feature>
<feature type="binding site" evidence="4">
    <location>
        <begin position="345"/>
        <end position="347"/>
    </location>
    <ligand>
        <name>substrate</name>
    </ligand>
</feature>
<feature type="site" description="Important for catalytic activity" evidence="1">
    <location>
        <position position="352"/>
    </location>
</feature>
<feature type="splice variant" id="VSP_033185" description="In isoform Cytoplasmic." evidence="6">
    <location>
        <begin position="1"/>
        <end position="19"/>
    </location>
</feature>
<reference key="1">
    <citation type="journal article" date="2005" name="Nature">
        <title>The genome of the social amoeba Dictyostelium discoideum.</title>
        <authorList>
            <person name="Eichinger L."/>
            <person name="Pachebat J.A."/>
            <person name="Gloeckner G."/>
            <person name="Rajandream M.A."/>
            <person name="Sucgang R."/>
            <person name="Berriman M."/>
            <person name="Song J."/>
            <person name="Olsen R."/>
            <person name="Szafranski K."/>
            <person name="Xu Q."/>
            <person name="Tunggal B."/>
            <person name="Kummerfeld S."/>
            <person name="Madera M."/>
            <person name="Konfortov B.A."/>
            <person name="Rivero F."/>
            <person name="Bankier A.T."/>
            <person name="Lehmann R."/>
            <person name="Hamlin N."/>
            <person name="Davies R."/>
            <person name="Gaudet P."/>
            <person name="Fey P."/>
            <person name="Pilcher K."/>
            <person name="Chen G."/>
            <person name="Saunders D."/>
            <person name="Sodergren E.J."/>
            <person name="Davis P."/>
            <person name="Kerhornou A."/>
            <person name="Nie X."/>
            <person name="Hall N."/>
            <person name="Anjard C."/>
            <person name="Hemphill L."/>
            <person name="Bason N."/>
            <person name="Farbrother P."/>
            <person name="Desany B."/>
            <person name="Just E."/>
            <person name="Morio T."/>
            <person name="Rost R."/>
            <person name="Churcher C.M."/>
            <person name="Cooper J."/>
            <person name="Haydock S."/>
            <person name="van Driessche N."/>
            <person name="Cronin A."/>
            <person name="Goodhead I."/>
            <person name="Muzny D.M."/>
            <person name="Mourier T."/>
            <person name="Pain A."/>
            <person name="Lu M."/>
            <person name="Harper D."/>
            <person name="Lindsay R."/>
            <person name="Hauser H."/>
            <person name="James K.D."/>
            <person name="Quiles M."/>
            <person name="Madan Babu M."/>
            <person name="Saito T."/>
            <person name="Buchrieser C."/>
            <person name="Wardroper A."/>
            <person name="Felder M."/>
            <person name="Thangavelu M."/>
            <person name="Johnson D."/>
            <person name="Knights A."/>
            <person name="Loulseged H."/>
            <person name="Mungall K.L."/>
            <person name="Oliver K."/>
            <person name="Price C."/>
            <person name="Quail M.A."/>
            <person name="Urushihara H."/>
            <person name="Hernandez J."/>
            <person name="Rabbinowitsch E."/>
            <person name="Steffen D."/>
            <person name="Sanders M."/>
            <person name="Ma J."/>
            <person name="Kohara Y."/>
            <person name="Sharp S."/>
            <person name="Simmonds M.N."/>
            <person name="Spiegler S."/>
            <person name="Tivey A."/>
            <person name="Sugano S."/>
            <person name="White B."/>
            <person name="Walker D."/>
            <person name="Woodward J.R."/>
            <person name="Winckler T."/>
            <person name="Tanaka Y."/>
            <person name="Shaulsky G."/>
            <person name="Schleicher M."/>
            <person name="Weinstock G.M."/>
            <person name="Rosenthal A."/>
            <person name="Cox E.C."/>
            <person name="Chisholm R.L."/>
            <person name="Gibbs R.A."/>
            <person name="Loomis W.F."/>
            <person name="Platzer M."/>
            <person name="Kay R.R."/>
            <person name="Williams J.G."/>
            <person name="Dear P.H."/>
            <person name="Noegel A.A."/>
            <person name="Barrell B.G."/>
            <person name="Kuspa A."/>
        </authorList>
    </citation>
    <scope>NUCLEOTIDE SEQUENCE [LARGE SCALE GENOMIC DNA]</scope>
    <source>
        <strain>AX4</strain>
    </source>
</reference>
<sequence>MLSASRKLNNQQFLKTIRNMTTFRSEFDTFGEVKVNDEKYWGAQTQRSLENFDIGGESEKMPLMVVRSFGILKRCAAIVNKKYGLDATIADNIAKAATEVVEGKLDDQFPLVVFQTGSGTQSNMNANEVISNRAIELMTGKRDFSKKLVHPNDHVNKSQSSNDTFPTCMHIAAAISINEKLVPALEMLLAAMRTKQNEFNHIIKIGRTHLQDATPLTLGQEFSGYCTQIEYGIQRIKDTLPRLYNLAQGGTAVGTGLNTPVGFDVDIASEVAKFTGLPFKTAPNKFEALAAHDAMVEVSGALNTVAVSLMKIANDIRFLGSGPRCGLGELILPENEPGSSIMPGKVNPTQCEAMTMVCAQVMGNNTTVSIAGSNGHFELNVFKPVIIKNVLSSIRLIADASVSFTKHCVVGIKADEKRIDQLLHESLMLVTALNPYIGYDKAAKAAKKAHKEKTTLKEACLSLGFTTSEEFDKWVDPSKMIGSMK</sequence>
<gene>
    <name evidence="7" type="primary">fumH</name>
    <name type="ORF">DDB_G0280495</name>
</gene>
<comment type="function">
    <text evidence="2">Catalyzes the reversible stereospecific interconversion of fumarate to L-malate.</text>
</comment>
<comment type="function">
    <molecule>Isoform Mitochondrial</molecule>
    <text evidence="3">Catalyzes the hydration of fumarate to L-malate in the tricarboxylic acid (TCA) cycle to facilitate a transition step in the production of energy in the form of NADH.</text>
</comment>
<comment type="catalytic activity">
    <reaction evidence="2">
        <text>(S)-malate = fumarate + H2O</text>
        <dbReference type="Rhea" id="RHEA:12460"/>
        <dbReference type="ChEBI" id="CHEBI:15377"/>
        <dbReference type="ChEBI" id="CHEBI:15589"/>
        <dbReference type="ChEBI" id="CHEBI:29806"/>
        <dbReference type="EC" id="4.2.1.2"/>
    </reaction>
</comment>
<comment type="pathway">
    <text evidence="3">Carbohydrate metabolism; tricarboxylic acid cycle; (S)-malate from fumarate: step 1/1.</text>
</comment>
<comment type="subunit">
    <text evidence="2">Homotetramer.</text>
</comment>
<comment type="subcellular location">
    <molecule>Isoform Mitochondrial</molecule>
    <subcellularLocation>
        <location evidence="2">Mitochondrion</location>
    </subcellularLocation>
</comment>
<comment type="subcellular location">
    <molecule>Isoform Cytoplasmic</molecule>
    <subcellularLocation>
        <location evidence="2">Cytoplasm</location>
    </subcellularLocation>
</comment>
<comment type="alternative products">
    <event type="alternative initiation"/>
    <isoform>
        <id>Q54VA2-1</id>
        <name>Mitochondrial</name>
        <sequence type="displayed"/>
    </isoform>
    <isoform>
        <id>Q54VA2-2</id>
        <name>Cytoplasmic</name>
        <sequence type="described" ref="VSP_033185"/>
    </isoform>
</comment>
<comment type="miscellaneous">
    <text evidence="1 4">There are 2 substrate-binding sites: the catalytic A site, and the non-catalytic B site that may play a role in the transfer of substrate or product between the active site and the solvent. Alternatively, the B site may bind allosteric effectors.</text>
</comment>
<comment type="similarity">
    <text evidence="6">Belongs to the class-II fumarase/aspartase family. Fumarase subfamily.</text>
</comment>
<evidence type="ECO:0000250" key="1">
    <source>
        <dbReference type="UniProtKB" id="P05042"/>
    </source>
</evidence>
<evidence type="ECO:0000250" key="2">
    <source>
        <dbReference type="UniProtKB" id="P07954"/>
    </source>
</evidence>
<evidence type="ECO:0000250" key="3">
    <source>
        <dbReference type="UniProtKB" id="P10173"/>
    </source>
</evidence>
<evidence type="ECO:0000250" key="4">
    <source>
        <dbReference type="UniProtKB" id="P9WN93"/>
    </source>
</evidence>
<evidence type="ECO:0000255" key="5"/>
<evidence type="ECO:0000305" key="6"/>
<evidence type="ECO:0000312" key="7">
    <source>
        <dbReference type="dictyBase" id="DDB_G0280495"/>
    </source>
</evidence>